<feature type="chain" id="PRO_1000072923" description="Imidazole glycerol phosphate synthase subunit HisF">
    <location>
        <begin position="1"/>
        <end position="255"/>
    </location>
</feature>
<feature type="active site" evidence="1">
    <location>
        <position position="11"/>
    </location>
</feature>
<feature type="active site" evidence="1">
    <location>
        <position position="130"/>
    </location>
</feature>
<evidence type="ECO:0000255" key="1">
    <source>
        <dbReference type="HAMAP-Rule" id="MF_01013"/>
    </source>
</evidence>
<dbReference type="EC" id="4.3.2.10" evidence="1"/>
<dbReference type="EMBL" id="CP000814">
    <property type="protein sequence ID" value="ABV53101.1"/>
    <property type="molecule type" value="Genomic_DNA"/>
</dbReference>
<dbReference type="RefSeq" id="WP_002866581.1">
    <property type="nucleotide sequence ID" value="NC_009839.1"/>
</dbReference>
<dbReference type="SMR" id="A8FNR4"/>
<dbReference type="KEGG" id="cju:C8J_1504"/>
<dbReference type="HOGENOM" id="CLU_048577_4_0_7"/>
<dbReference type="UniPathway" id="UPA00031">
    <property type="reaction ID" value="UER00010"/>
</dbReference>
<dbReference type="GO" id="GO:0005737">
    <property type="term" value="C:cytoplasm"/>
    <property type="evidence" value="ECO:0007669"/>
    <property type="project" value="UniProtKB-SubCell"/>
</dbReference>
<dbReference type="GO" id="GO:0000107">
    <property type="term" value="F:imidazoleglycerol-phosphate synthase activity"/>
    <property type="evidence" value="ECO:0007669"/>
    <property type="project" value="UniProtKB-UniRule"/>
</dbReference>
<dbReference type="GO" id="GO:0016829">
    <property type="term" value="F:lyase activity"/>
    <property type="evidence" value="ECO:0007669"/>
    <property type="project" value="UniProtKB-KW"/>
</dbReference>
<dbReference type="GO" id="GO:0000105">
    <property type="term" value="P:L-histidine biosynthetic process"/>
    <property type="evidence" value="ECO:0007669"/>
    <property type="project" value="UniProtKB-UniRule"/>
</dbReference>
<dbReference type="CDD" id="cd04731">
    <property type="entry name" value="HisF"/>
    <property type="match status" value="1"/>
</dbReference>
<dbReference type="FunFam" id="3.20.20.70:FF:000006">
    <property type="entry name" value="Imidazole glycerol phosphate synthase subunit HisF"/>
    <property type="match status" value="1"/>
</dbReference>
<dbReference type="Gene3D" id="3.20.20.70">
    <property type="entry name" value="Aldolase class I"/>
    <property type="match status" value="1"/>
</dbReference>
<dbReference type="HAMAP" id="MF_01013">
    <property type="entry name" value="HisF"/>
    <property type="match status" value="1"/>
</dbReference>
<dbReference type="InterPro" id="IPR013785">
    <property type="entry name" value="Aldolase_TIM"/>
</dbReference>
<dbReference type="InterPro" id="IPR006062">
    <property type="entry name" value="His_biosynth"/>
</dbReference>
<dbReference type="InterPro" id="IPR004651">
    <property type="entry name" value="HisF"/>
</dbReference>
<dbReference type="InterPro" id="IPR050064">
    <property type="entry name" value="IGPS_HisA/HisF"/>
</dbReference>
<dbReference type="InterPro" id="IPR011060">
    <property type="entry name" value="RibuloseP-bd_barrel"/>
</dbReference>
<dbReference type="NCBIfam" id="TIGR00735">
    <property type="entry name" value="hisF"/>
    <property type="match status" value="1"/>
</dbReference>
<dbReference type="PANTHER" id="PTHR21235:SF2">
    <property type="entry name" value="IMIDAZOLE GLYCEROL PHOSPHATE SYNTHASE HISHF"/>
    <property type="match status" value="1"/>
</dbReference>
<dbReference type="PANTHER" id="PTHR21235">
    <property type="entry name" value="IMIDAZOLE GLYCEROL PHOSPHATE SYNTHASE SUBUNIT HISF/H IGP SYNTHASE SUBUNIT HISF/H"/>
    <property type="match status" value="1"/>
</dbReference>
<dbReference type="Pfam" id="PF00977">
    <property type="entry name" value="His_biosynth"/>
    <property type="match status" value="1"/>
</dbReference>
<dbReference type="SUPFAM" id="SSF51366">
    <property type="entry name" value="Ribulose-phoshate binding barrel"/>
    <property type="match status" value="1"/>
</dbReference>
<comment type="function">
    <text evidence="1">IGPS catalyzes the conversion of PRFAR and glutamine to IGP, AICAR and glutamate. The HisF subunit catalyzes the cyclization activity that produces IGP and AICAR from PRFAR using the ammonia provided by the HisH subunit.</text>
</comment>
<comment type="catalytic activity">
    <reaction evidence="1">
        <text>5-[(5-phospho-1-deoxy-D-ribulos-1-ylimino)methylamino]-1-(5-phospho-beta-D-ribosyl)imidazole-4-carboxamide + L-glutamine = D-erythro-1-(imidazol-4-yl)glycerol 3-phosphate + 5-amino-1-(5-phospho-beta-D-ribosyl)imidazole-4-carboxamide + L-glutamate + H(+)</text>
        <dbReference type="Rhea" id="RHEA:24793"/>
        <dbReference type="ChEBI" id="CHEBI:15378"/>
        <dbReference type="ChEBI" id="CHEBI:29985"/>
        <dbReference type="ChEBI" id="CHEBI:58278"/>
        <dbReference type="ChEBI" id="CHEBI:58359"/>
        <dbReference type="ChEBI" id="CHEBI:58475"/>
        <dbReference type="ChEBI" id="CHEBI:58525"/>
        <dbReference type="EC" id="4.3.2.10"/>
    </reaction>
</comment>
<comment type="pathway">
    <text evidence="1">Amino-acid biosynthesis; L-histidine biosynthesis; L-histidine from 5-phospho-alpha-D-ribose 1-diphosphate: step 5/9.</text>
</comment>
<comment type="subunit">
    <text evidence="1">Heterodimer of HisH and HisF.</text>
</comment>
<comment type="subcellular location">
    <subcellularLocation>
        <location evidence="1">Cytoplasm</location>
    </subcellularLocation>
</comment>
<comment type="similarity">
    <text evidence="1">Belongs to the HisA/HisF family.</text>
</comment>
<keyword id="KW-0028">Amino-acid biosynthesis</keyword>
<keyword id="KW-0963">Cytoplasm</keyword>
<keyword id="KW-0368">Histidine biosynthesis</keyword>
<keyword id="KW-0456">Lyase</keyword>
<protein>
    <recommendedName>
        <fullName evidence="1">Imidazole glycerol phosphate synthase subunit HisF</fullName>
        <ecNumber evidence="1">4.3.2.10</ecNumber>
    </recommendedName>
    <alternativeName>
        <fullName evidence="1">IGP synthase cyclase subunit</fullName>
    </alternativeName>
    <alternativeName>
        <fullName evidence="1">IGP synthase subunit HisF</fullName>
    </alternativeName>
    <alternativeName>
        <fullName evidence="1">ImGP synthase subunit HisF</fullName>
        <shortName evidence="1">IGPS subunit HisF</shortName>
    </alternativeName>
</protein>
<organism>
    <name type="scientific">Campylobacter jejuni subsp. jejuni serotype O:6 (strain 81116 / NCTC 11828)</name>
    <dbReference type="NCBI Taxonomy" id="407148"/>
    <lineage>
        <taxon>Bacteria</taxon>
        <taxon>Pseudomonadati</taxon>
        <taxon>Campylobacterota</taxon>
        <taxon>Epsilonproteobacteria</taxon>
        <taxon>Campylobacterales</taxon>
        <taxon>Campylobacteraceae</taxon>
        <taxon>Campylobacter</taxon>
    </lineage>
</organism>
<name>HIS6_CAMJ8</name>
<accession>A8FNR4</accession>
<sequence length="255" mass="28069">MLTKRIIACLDVKDGRVVKGTQFKNHKDMGDIIELARYYSQNGIDELVFYDIAASARKERISREWVSEVAKNINIPFCVAGGIKSEEDAAELLANGADKISINSPALNDPSLITRLAKSFGVQCVVVGIDSFKDENGNLKVFQYTGDEKTSKHSGKSTLEWVKEVQDLGAGEIVLNMMNQDGVKNGYDLEQLKAVYKICKVPLIASGGAGKMEHFLEAFKLGIDGALAASVFHQKLIDIKELKIYLKNQGLSIRI</sequence>
<gene>
    <name evidence="1" type="primary">hisF</name>
    <name type="ordered locus">C8J_1504</name>
</gene>
<proteinExistence type="inferred from homology"/>
<reference key="1">
    <citation type="journal article" date="2007" name="J. Bacteriol.">
        <title>The complete genome sequence of Campylobacter jejuni strain 81116 (NCTC11828).</title>
        <authorList>
            <person name="Pearson B.M."/>
            <person name="Gaskin D.J.H."/>
            <person name="Segers R.P.A.M."/>
            <person name="Wells J.M."/>
            <person name="Nuijten P.J.M."/>
            <person name="van Vliet A.H.M."/>
        </authorList>
    </citation>
    <scope>NUCLEOTIDE SEQUENCE [LARGE SCALE GENOMIC DNA]</scope>
    <source>
        <strain>81116 / NCTC 11828</strain>
    </source>
</reference>